<name>EX7S_PSEU2</name>
<feature type="chain" id="PRO_0000303738" description="Exodeoxyribonuclease 7 small subunit">
    <location>
        <begin position="1"/>
        <end position="81"/>
    </location>
</feature>
<organism>
    <name type="scientific">Pseudomonas syringae pv. syringae (strain B728a)</name>
    <dbReference type="NCBI Taxonomy" id="205918"/>
    <lineage>
        <taxon>Bacteria</taxon>
        <taxon>Pseudomonadati</taxon>
        <taxon>Pseudomonadota</taxon>
        <taxon>Gammaproteobacteria</taxon>
        <taxon>Pseudomonadales</taxon>
        <taxon>Pseudomonadaceae</taxon>
        <taxon>Pseudomonas</taxon>
        <taxon>Pseudomonas syringae</taxon>
    </lineage>
</organism>
<sequence length="81" mass="9079">MARKKAALDFEQSLADLQALVERLENGELSLEDSLTAFEQGVRLTRDCQSALTQAEQKVQVLLERDGELSEEPFDDAELPE</sequence>
<reference key="1">
    <citation type="journal article" date="2005" name="Proc. Natl. Acad. Sci. U.S.A.">
        <title>Comparison of the complete genome sequences of Pseudomonas syringae pv. syringae B728a and pv. tomato DC3000.</title>
        <authorList>
            <person name="Feil H."/>
            <person name="Feil W.S."/>
            <person name="Chain P."/>
            <person name="Larimer F."/>
            <person name="Dibartolo G."/>
            <person name="Copeland A."/>
            <person name="Lykidis A."/>
            <person name="Trong S."/>
            <person name="Nolan M."/>
            <person name="Goltsman E."/>
            <person name="Thiel J."/>
            <person name="Malfatti S."/>
            <person name="Loper J.E."/>
            <person name="Lapidus A."/>
            <person name="Detter J.C."/>
            <person name="Land M."/>
            <person name="Richardson P.M."/>
            <person name="Kyrpides N.C."/>
            <person name="Ivanova N."/>
            <person name="Lindow S.E."/>
        </authorList>
    </citation>
    <scope>NUCLEOTIDE SEQUENCE [LARGE SCALE GENOMIC DNA]</scope>
    <source>
        <strain>B728a</strain>
    </source>
</reference>
<dbReference type="EC" id="3.1.11.6" evidence="1"/>
<dbReference type="EMBL" id="CP000075">
    <property type="protein sequence ID" value="AAY35676.1"/>
    <property type="molecule type" value="Genomic_DNA"/>
</dbReference>
<dbReference type="RefSeq" id="WP_002551852.1">
    <property type="nucleotide sequence ID" value="NC_007005.1"/>
</dbReference>
<dbReference type="RefSeq" id="YP_233714.1">
    <property type="nucleotide sequence ID" value="NC_007005.1"/>
</dbReference>
<dbReference type="SMR" id="Q4ZYU6"/>
<dbReference type="STRING" id="205918.Psyr_0606"/>
<dbReference type="KEGG" id="psb:Psyr_0606"/>
<dbReference type="PATRIC" id="fig|205918.7.peg.629"/>
<dbReference type="eggNOG" id="COG1722">
    <property type="taxonomic scope" value="Bacteria"/>
</dbReference>
<dbReference type="HOGENOM" id="CLU_145918_3_3_6"/>
<dbReference type="OrthoDB" id="9801128at2"/>
<dbReference type="Proteomes" id="UP000000426">
    <property type="component" value="Chromosome"/>
</dbReference>
<dbReference type="GO" id="GO:0005829">
    <property type="term" value="C:cytosol"/>
    <property type="evidence" value="ECO:0007669"/>
    <property type="project" value="TreeGrafter"/>
</dbReference>
<dbReference type="GO" id="GO:0009318">
    <property type="term" value="C:exodeoxyribonuclease VII complex"/>
    <property type="evidence" value="ECO:0007669"/>
    <property type="project" value="InterPro"/>
</dbReference>
<dbReference type="GO" id="GO:0008855">
    <property type="term" value="F:exodeoxyribonuclease VII activity"/>
    <property type="evidence" value="ECO:0007669"/>
    <property type="project" value="UniProtKB-UniRule"/>
</dbReference>
<dbReference type="GO" id="GO:0006308">
    <property type="term" value="P:DNA catabolic process"/>
    <property type="evidence" value="ECO:0007669"/>
    <property type="project" value="UniProtKB-UniRule"/>
</dbReference>
<dbReference type="Gene3D" id="1.10.287.1040">
    <property type="entry name" value="Exonuclease VII, small subunit"/>
    <property type="match status" value="1"/>
</dbReference>
<dbReference type="HAMAP" id="MF_00337">
    <property type="entry name" value="Exonuc_7_S"/>
    <property type="match status" value="1"/>
</dbReference>
<dbReference type="InterPro" id="IPR003761">
    <property type="entry name" value="Exonuc_VII_S"/>
</dbReference>
<dbReference type="InterPro" id="IPR037004">
    <property type="entry name" value="Exonuc_VII_ssu_sf"/>
</dbReference>
<dbReference type="NCBIfam" id="NF002140">
    <property type="entry name" value="PRK00977.1-4"/>
    <property type="match status" value="1"/>
</dbReference>
<dbReference type="NCBIfam" id="TIGR01280">
    <property type="entry name" value="xseB"/>
    <property type="match status" value="1"/>
</dbReference>
<dbReference type="PANTHER" id="PTHR34137">
    <property type="entry name" value="EXODEOXYRIBONUCLEASE 7 SMALL SUBUNIT"/>
    <property type="match status" value="1"/>
</dbReference>
<dbReference type="PANTHER" id="PTHR34137:SF1">
    <property type="entry name" value="EXODEOXYRIBONUCLEASE 7 SMALL SUBUNIT"/>
    <property type="match status" value="1"/>
</dbReference>
<dbReference type="Pfam" id="PF02609">
    <property type="entry name" value="Exonuc_VII_S"/>
    <property type="match status" value="1"/>
</dbReference>
<dbReference type="PIRSF" id="PIRSF006488">
    <property type="entry name" value="Exonuc_VII_S"/>
    <property type="match status" value="1"/>
</dbReference>
<dbReference type="SUPFAM" id="SSF116842">
    <property type="entry name" value="XseB-like"/>
    <property type="match status" value="1"/>
</dbReference>
<keyword id="KW-0963">Cytoplasm</keyword>
<keyword id="KW-0269">Exonuclease</keyword>
<keyword id="KW-0378">Hydrolase</keyword>
<keyword id="KW-0540">Nuclease</keyword>
<protein>
    <recommendedName>
        <fullName evidence="1">Exodeoxyribonuclease 7 small subunit</fullName>
        <ecNumber evidence="1">3.1.11.6</ecNumber>
    </recommendedName>
    <alternativeName>
        <fullName evidence="1">Exodeoxyribonuclease VII small subunit</fullName>
        <shortName evidence="1">Exonuclease VII small subunit</shortName>
    </alternativeName>
</protein>
<evidence type="ECO:0000255" key="1">
    <source>
        <dbReference type="HAMAP-Rule" id="MF_00337"/>
    </source>
</evidence>
<gene>
    <name evidence="1" type="primary">xseB</name>
    <name type="ordered locus">Psyr_0606</name>
</gene>
<comment type="function">
    <text evidence="1">Bidirectionally degrades single-stranded DNA into large acid-insoluble oligonucleotides, which are then degraded further into small acid-soluble oligonucleotides.</text>
</comment>
<comment type="catalytic activity">
    <reaction evidence="1">
        <text>Exonucleolytic cleavage in either 5'- to 3'- or 3'- to 5'-direction to yield nucleoside 5'-phosphates.</text>
        <dbReference type="EC" id="3.1.11.6"/>
    </reaction>
</comment>
<comment type="subunit">
    <text evidence="1">Heterooligomer composed of large and small subunits.</text>
</comment>
<comment type="subcellular location">
    <subcellularLocation>
        <location evidence="1">Cytoplasm</location>
    </subcellularLocation>
</comment>
<comment type="similarity">
    <text evidence="1">Belongs to the XseB family.</text>
</comment>
<proteinExistence type="inferred from homology"/>
<accession>Q4ZYU6</accession>